<sequence length="415" mass="45884">TYYTPDYETKDTDILAAFRVTPQPGVPPEGAGAAVAAESSTGTWTTVWTDGLTSLDRYKGRCYQIEPVAGEENQYIAYVAYPLDLFEEGSVTNMFTSIVGNVFGFKALRALRLEDLRIPPAYAKTFQGPPHGIQVERDKLNKYGRPLLGCTIKPKLGLSAKNYGRAVYECLRGGLDFTKDDENVNSQPFMRWRDRFLFVAEALFKAQAETGEIKGHYLNATAGTCEEMMKRAVFARELGVPIIMHDYLTGGFTANTSLAFYCRDNGLLLHIHRAMHAVIDRQKNHGMHFRVLAKALRMSGGDHIHVGTVVGKLEGEREVTLGFVDLLRDDYIEKDRSRGVYFTQDWVSMPGVLPVASGGIHVWHMPALTEIFGDDSVLQFGGGTVGHPWGNAPGAVANRVALEACVQARNEGRDL</sequence>
<evidence type="ECO:0000255" key="1">
    <source>
        <dbReference type="HAMAP-Rule" id="MF_01338"/>
    </source>
</evidence>
<feature type="chain" id="PRO_0000062412" description="Ribulose bisphosphate carboxylase large chain">
    <location>
        <begin position="1" status="less than"/>
        <end position="415" status="greater than"/>
    </location>
</feature>
<feature type="active site" description="Proton acceptor" evidence="1">
    <location>
        <position position="153"/>
    </location>
</feature>
<feature type="active site" description="Proton acceptor" evidence="1">
    <location>
        <position position="272"/>
    </location>
</feature>
<feature type="binding site" description="in homodimeric partner" evidence="1">
    <location>
        <position position="101"/>
    </location>
    <ligand>
        <name>substrate</name>
    </ligand>
</feature>
<feature type="binding site" evidence="1">
    <location>
        <position position="151"/>
    </location>
    <ligand>
        <name>substrate</name>
    </ligand>
</feature>
<feature type="binding site" evidence="1">
    <location>
        <position position="155"/>
    </location>
    <ligand>
        <name>substrate</name>
    </ligand>
</feature>
<feature type="binding site" description="via carbamate group" evidence="1">
    <location>
        <position position="179"/>
    </location>
    <ligand>
        <name>Mg(2+)</name>
        <dbReference type="ChEBI" id="CHEBI:18420"/>
    </ligand>
</feature>
<feature type="binding site" evidence="1">
    <location>
        <position position="181"/>
    </location>
    <ligand>
        <name>Mg(2+)</name>
        <dbReference type="ChEBI" id="CHEBI:18420"/>
    </ligand>
</feature>
<feature type="binding site" evidence="1">
    <location>
        <position position="182"/>
    </location>
    <ligand>
        <name>Mg(2+)</name>
        <dbReference type="ChEBI" id="CHEBI:18420"/>
    </ligand>
</feature>
<feature type="binding site" evidence="1">
    <location>
        <position position="273"/>
    </location>
    <ligand>
        <name>substrate</name>
    </ligand>
</feature>
<feature type="binding site" evidence="1">
    <location>
        <position position="305"/>
    </location>
    <ligand>
        <name>substrate</name>
    </ligand>
</feature>
<feature type="binding site" evidence="1">
    <location>
        <position position="357"/>
    </location>
    <ligand>
        <name>substrate</name>
    </ligand>
</feature>
<feature type="site" description="Transition state stabilizer" evidence="1">
    <location>
        <position position="312"/>
    </location>
</feature>
<feature type="modified residue" description="N6-carboxylysine" evidence="1">
    <location>
        <position position="179"/>
    </location>
</feature>
<feature type="disulfide bond" description="Interchain; in linked form" evidence="1">
    <location>
        <position position="225"/>
    </location>
</feature>
<feature type="non-terminal residue">
    <location>
        <position position="1"/>
    </location>
</feature>
<feature type="non-terminal residue">
    <location>
        <position position="415"/>
    </location>
</feature>
<keyword id="KW-0113">Calvin cycle</keyword>
<keyword id="KW-0120">Carbon dioxide fixation</keyword>
<keyword id="KW-0150">Chloroplast</keyword>
<keyword id="KW-1015">Disulfide bond</keyword>
<keyword id="KW-0456">Lyase</keyword>
<keyword id="KW-0460">Magnesium</keyword>
<keyword id="KW-0479">Metal-binding</keyword>
<keyword id="KW-0503">Monooxygenase</keyword>
<keyword id="KW-0560">Oxidoreductase</keyword>
<keyword id="KW-0601">Photorespiration</keyword>
<keyword id="KW-0602">Photosynthesis</keyword>
<keyword id="KW-0934">Plastid</keyword>
<reference key="1">
    <citation type="journal article" date="1994" name="Proc. Natl. Acad. Sci. U.S.A.">
        <title>rbcL gene sequences provide evidence for the evolutionary lineages of leptosporangiate ferns.</title>
        <authorList>
            <person name="Hasebe M."/>
            <person name="Omori T."/>
            <person name="Nakazawa M."/>
            <person name="Sano T."/>
            <person name="Kato M."/>
            <person name="Iwatsuki K."/>
        </authorList>
    </citation>
    <scope>NUCLEOTIDE SEQUENCE [GENOMIC DNA]</scope>
    <source>
        <tissue>Leaf</tissue>
    </source>
</reference>
<organism>
    <name type="scientific">Cibotium barometz</name>
    <name type="common">Scythian lamb</name>
    <name type="synonym">Polypodium barometz</name>
    <dbReference type="NCBI Taxonomy" id="29588"/>
    <lineage>
        <taxon>Eukaryota</taxon>
        <taxon>Viridiplantae</taxon>
        <taxon>Streptophyta</taxon>
        <taxon>Embryophyta</taxon>
        <taxon>Tracheophyta</taxon>
        <taxon>Polypodiopsida</taxon>
        <taxon>Polypodiidae</taxon>
        <taxon>Cyatheales</taxon>
        <taxon>Cibotiaceae</taxon>
        <taxon>Cibotium</taxon>
    </lineage>
</organism>
<geneLocation type="chloroplast"/>
<dbReference type="EC" id="4.1.1.39" evidence="1"/>
<dbReference type="EMBL" id="U05610">
    <property type="protein sequence ID" value="AAA19894.1"/>
    <property type="molecule type" value="Genomic_DNA"/>
</dbReference>
<dbReference type="SMR" id="P43228"/>
<dbReference type="GO" id="GO:0009507">
    <property type="term" value="C:chloroplast"/>
    <property type="evidence" value="ECO:0007669"/>
    <property type="project" value="UniProtKB-SubCell"/>
</dbReference>
<dbReference type="GO" id="GO:0000287">
    <property type="term" value="F:magnesium ion binding"/>
    <property type="evidence" value="ECO:0007669"/>
    <property type="project" value="InterPro"/>
</dbReference>
<dbReference type="GO" id="GO:0004497">
    <property type="term" value="F:monooxygenase activity"/>
    <property type="evidence" value="ECO:0007669"/>
    <property type="project" value="UniProtKB-KW"/>
</dbReference>
<dbReference type="GO" id="GO:0016984">
    <property type="term" value="F:ribulose-bisphosphate carboxylase activity"/>
    <property type="evidence" value="ECO:0007669"/>
    <property type="project" value="UniProtKB-EC"/>
</dbReference>
<dbReference type="GO" id="GO:0009853">
    <property type="term" value="P:photorespiration"/>
    <property type="evidence" value="ECO:0007669"/>
    <property type="project" value="UniProtKB-KW"/>
</dbReference>
<dbReference type="GO" id="GO:0019253">
    <property type="term" value="P:reductive pentose-phosphate cycle"/>
    <property type="evidence" value="ECO:0007669"/>
    <property type="project" value="UniProtKB-KW"/>
</dbReference>
<dbReference type="CDD" id="cd08212">
    <property type="entry name" value="RuBisCO_large_I"/>
    <property type="match status" value="1"/>
</dbReference>
<dbReference type="FunFam" id="3.20.20.110:FF:000003">
    <property type="entry name" value="Ribulose bisphosphate carboxylase large chain"/>
    <property type="match status" value="1"/>
</dbReference>
<dbReference type="Gene3D" id="3.20.20.110">
    <property type="entry name" value="Ribulose bisphosphate carboxylase, large subunit, C-terminal domain"/>
    <property type="match status" value="1"/>
</dbReference>
<dbReference type="Gene3D" id="3.30.70.150">
    <property type="entry name" value="RuBisCO large subunit, N-terminal domain"/>
    <property type="match status" value="1"/>
</dbReference>
<dbReference type="HAMAP" id="MF_01338">
    <property type="entry name" value="RuBisCO_L_type1"/>
    <property type="match status" value="1"/>
</dbReference>
<dbReference type="InterPro" id="IPR033966">
    <property type="entry name" value="RuBisCO"/>
</dbReference>
<dbReference type="InterPro" id="IPR020878">
    <property type="entry name" value="RuBisCo_large_chain_AS"/>
</dbReference>
<dbReference type="InterPro" id="IPR000685">
    <property type="entry name" value="RuBisCO_lsu_C"/>
</dbReference>
<dbReference type="InterPro" id="IPR036376">
    <property type="entry name" value="RuBisCO_lsu_C_sf"/>
</dbReference>
<dbReference type="InterPro" id="IPR017443">
    <property type="entry name" value="RuBisCO_lsu_fd_N"/>
</dbReference>
<dbReference type="InterPro" id="IPR036422">
    <property type="entry name" value="RuBisCO_lsu_N_sf"/>
</dbReference>
<dbReference type="InterPro" id="IPR020888">
    <property type="entry name" value="RuBisCO_lsuI"/>
</dbReference>
<dbReference type="NCBIfam" id="NF003252">
    <property type="entry name" value="PRK04208.1"/>
    <property type="match status" value="1"/>
</dbReference>
<dbReference type="PANTHER" id="PTHR42704">
    <property type="entry name" value="RIBULOSE BISPHOSPHATE CARBOXYLASE"/>
    <property type="match status" value="1"/>
</dbReference>
<dbReference type="PANTHER" id="PTHR42704:SF15">
    <property type="entry name" value="RIBULOSE BISPHOSPHATE CARBOXYLASE LARGE CHAIN"/>
    <property type="match status" value="1"/>
</dbReference>
<dbReference type="Pfam" id="PF00016">
    <property type="entry name" value="RuBisCO_large"/>
    <property type="match status" value="1"/>
</dbReference>
<dbReference type="Pfam" id="PF02788">
    <property type="entry name" value="RuBisCO_large_N"/>
    <property type="match status" value="1"/>
</dbReference>
<dbReference type="SFLD" id="SFLDG01052">
    <property type="entry name" value="RuBisCO"/>
    <property type="match status" value="1"/>
</dbReference>
<dbReference type="SFLD" id="SFLDS00014">
    <property type="entry name" value="RuBisCO"/>
    <property type="match status" value="1"/>
</dbReference>
<dbReference type="SFLD" id="SFLDG00301">
    <property type="entry name" value="RuBisCO-like_proteins"/>
    <property type="match status" value="1"/>
</dbReference>
<dbReference type="SUPFAM" id="SSF51649">
    <property type="entry name" value="RuBisCo, C-terminal domain"/>
    <property type="match status" value="1"/>
</dbReference>
<dbReference type="SUPFAM" id="SSF54966">
    <property type="entry name" value="RuBisCO, large subunit, small (N-terminal) domain"/>
    <property type="match status" value="1"/>
</dbReference>
<dbReference type="PROSITE" id="PS00157">
    <property type="entry name" value="RUBISCO_LARGE"/>
    <property type="match status" value="1"/>
</dbReference>
<comment type="function">
    <text evidence="1">RuBisCO catalyzes two reactions: the carboxylation of D-ribulose 1,5-bisphosphate, the primary event in carbon dioxide fixation, as well as the oxidative fragmentation of the pentose substrate in the photorespiration process. Both reactions occur simultaneously and in competition at the same active site.</text>
</comment>
<comment type="catalytic activity">
    <reaction evidence="1">
        <text>2 (2R)-3-phosphoglycerate + 2 H(+) = D-ribulose 1,5-bisphosphate + CO2 + H2O</text>
        <dbReference type="Rhea" id="RHEA:23124"/>
        <dbReference type="ChEBI" id="CHEBI:15377"/>
        <dbReference type="ChEBI" id="CHEBI:15378"/>
        <dbReference type="ChEBI" id="CHEBI:16526"/>
        <dbReference type="ChEBI" id="CHEBI:57870"/>
        <dbReference type="ChEBI" id="CHEBI:58272"/>
        <dbReference type="EC" id="4.1.1.39"/>
    </reaction>
</comment>
<comment type="catalytic activity">
    <reaction evidence="1">
        <text>D-ribulose 1,5-bisphosphate + O2 = 2-phosphoglycolate + (2R)-3-phosphoglycerate + 2 H(+)</text>
        <dbReference type="Rhea" id="RHEA:36631"/>
        <dbReference type="ChEBI" id="CHEBI:15378"/>
        <dbReference type="ChEBI" id="CHEBI:15379"/>
        <dbReference type="ChEBI" id="CHEBI:57870"/>
        <dbReference type="ChEBI" id="CHEBI:58033"/>
        <dbReference type="ChEBI" id="CHEBI:58272"/>
    </reaction>
</comment>
<comment type="cofactor">
    <cofactor evidence="1">
        <name>Mg(2+)</name>
        <dbReference type="ChEBI" id="CHEBI:18420"/>
    </cofactor>
    <text evidence="1">Binds 1 Mg(2+) ion per subunit.</text>
</comment>
<comment type="subunit">
    <text evidence="1">Heterohexadecamer of 8 large chains and 8 small chains; disulfide-linked. The disulfide link is formed within the large subunit homodimers.</text>
</comment>
<comment type="subcellular location">
    <subcellularLocation>
        <location>Plastid</location>
        <location>Chloroplast</location>
    </subcellularLocation>
</comment>
<comment type="PTM">
    <text evidence="1">The disulfide bond which can form in the large chain dimeric partners within the hexadecamer appears to be associated with oxidative stress and protein turnover.</text>
</comment>
<comment type="miscellaneous">
    <text evidence="1">The basic functional RuBisCO is composed of a large chain homodimer in a 'head-to-tail' conformation. In form I RuBisCO this homodimer is arranged in a barrel-like tetramer with the small subunits forming a tetrameric 'cap' on each end of the 'barrel'.</text>
</comment>
<comment type="similarity">
    <text evidence="1">Belongs to the RuBisCO large chain family. Type I subfamily.</text>
</comment>
<accession>P43228</accession>
<protein>
    <recommendedName>
        <fullName evidence="1">Ribulose bisphosphate carboxylase large chain</fullName>
        <shortName evidence="1">RuBisCO large subunit</shortName>
        <ecNumber evidence="1">4.1.1.39</ecNumber>
    </recommendedName>
</protein>
<proteinExistence type="inferred from homology"/>
<gene>
    <name evidence="1" type="primary">rbcL</name>
</gene>
<name>RBL_CIBBA</name>